<protein>
    <recommendedName>
        <fullName>Sarafotoxin-D</fullName>
        <shortName>SRTX-D</shortName>
    </recommendedName>
    <alternativeName>
        <fullName>S6D</fullName>
    </alternativeName>
</protein>
<reference key="1">
    <citation type="journal article" date="1989" name="FEBS Lett.">
        <title>SRTX-d, a new native peptide of the endothelin/sarafotoxin family.</title>
        <authorList>
            <person name="Bdolah A."/>
            <person name="Wollberg Z."/>
            <person name="Fleminger G."/>
        </authorList>
    </citation>
    <scope>PROTEIN SEQUENCE</scope>
    <scope>FUNCTION</scope>
    <scope>TOXIC DOSE</scope>
    <source>
        <tissue>Venom</tissue>
    </source>
</reference>
<keyword id="KW-0123">Cardiotoxin</keyword>
<keyword id="KW-0903">Direct protein sequencing</keyword>
<keyword id="KW-1015">Disulfide bond</keyword>
<keyword id="KW-1213">G-protein coupled receptor impairing toxin</keyword>
<keyword id="KW-0964">Secreted</keyword>
<keyword id="KW-0800">Toxin</keyword>
<keyword id="KW-0838">Vasoactive</keyword>
<keyword id="KW-0839">Vasoconstrictor</keyword>
<comment type="function">
    <text evidence="2">Vasoconstrictor activity. These toxins cause cardiac arrest probably as a result of coronary vasospasm. May act by displaying agonistic activities towards endothelin-1 and -2 receptors (EDNRA and EDNRB).</text>
</comment>
<comment type="subcellular location">
    <subcellularLocation>
        <location>Secreted</location>
    </subcellularLocation>
</comment>
<comment type="tissue specificity">
    <text>Expressed by the venom gland.</text>
</comment>
<comment type="toxic dose">
    <text evidence="2">LD(50) is 0.35 mg/kg by intravenous injection.</text>
</comment>
<comment type="similarity">
    <text evidence="3">Belongs to the endothelin/sarafotoxin family.</text>
</comment>
<accession>P13211</accession>
<feature type="peptide" id="PRO_0000043644" description="Sarafotoxin-D">
    <location>
        <begin position="1"/>
        <end position="21"/>
    </location>
</feature>
<feature type="site" description="Endothelin-receptor binding site" evidence="1">
    <location>
        <position position="21"/>
    </location>
</feature>
<feature type="disulfide bond" evidence="1">
    <location>
        <begin position="1"/>
        <end position="15"/>
    </location>
</feature>
<feature type="disulfide bond" evidence="1">
    <location>
        <begin position="3"/>
        <end position="11"/>
    </location>
</feature>
<sequence length="21" mass="2596">CTCKDMTDKECLYFCHQDIIW</sequence>
<name>SRTXD_ATREN</name>
<dbReference type="GO" id="GO:0005576">
    <property type="term" value="C:extracellular region"/>
    <property type="evidence" value="ECO:0007669"/>
    <property type="project" value="UniProtKB-SubCell"/>
</dbReference>
<dbReference type="GO" id="GO:0090729">
    <property type="term" value="F:toxin activity"/>
    <property type="evidence" value="ECO:0007669"/>
    <property type="project" value="UniProtKB-KW"/>
</dbReference>
<dbReference type="GO" id="GO:0019229">
    <property type="term" value="P:regulation of vasoconstriction"/>
    <property type="evidence" value="ECO:0007669"/>
    <property type="project" value="InterPro"/>
</dbReference>
<dbReference type="GO" id="GO:0042310">
    <property type="term" value="P:vasoconstriction"/>
    <property type="evidence" value="ECO:0007669"/>
    <property type="project" value="UniProtKB-KW"/>
</dbReference>
<dbReference type="InterPro" id="IPR019764">
    <property type="entry name" value="Endothelin_toxin_CS"/>
</dbReference>
<dbReference type="InterPro" id="IPR001928">
    <property type="entry name" value="Endothln-like_toxin"/>
</dbReference>
<dbReference type="Pfam" id="PF00322">
    <property type="entry name" value="Endothelin"/>
    <property type="match status" value="1"/>
</dbReference>
<dbReference type="SMART" id="SM00272">
    <property type="entry name" value="END"/>
    <property type="match status" value="1"/>
</dbReference>
<dbReference type="PROSITE" id="PS00270">
    <property type="entry name" value="ENDOTHELIN"/>
    <property type="match status" value="1"/>
</dbReference>
<evidence type="ECO:0000250" key="1"/>
<evidence type="ECO:0000269" key="2">
    <source>
    </source>
</evidence>
<evidence type="ECO:0000305" key="3"/>
<proteinExistence type="evidence at protein level"/>
<organism>
    <name type="scientific">Atractaspis engaddensis</name>
    <name type="common">Israeli burrowing asp</name>
    <name type="synonym">Israeli mole viper</name>
    <dbReference type="NCBI Taxonomy" id="1343144"/>
    <lineage>
        <taxon>Eukaryota</taxon>
        <taxon>Metazoa</taxon>
        <taxon>Chordata</taxon>
        <taxon>Craniata</taxon>
        <taxon>Vertebrata</taxon>
        <taxon>Euteleostomi</taxon>
        <taxon>Lepidosauria</taxon>
        <taxon>Squamata</taxon>
        <taxon>Bifurcata</taxon>
        <taxon>Unidentata</taxon>
        <taxon>Episquamata</taxon>
        <taxon>Toxicofera</taxon>
        <taxon>Serpentes</taxon>
        <taxon>Colubroidea</taxon>
        <taxon>Lamprophiidae</taxon>
        <taxon>Atractaspidinae</taxon>
        <taxon>Atractaspis</taxon>
    </lineage>
</organism>